<evidence type="ECO:0000255" key="1">
    <source>
        <dbReference type="HAMAP-Rule" id="MF_00249"/>
    </source>
</evidence>
<evidence type="ECO:0000256" key="2">
    <source>
        <dbReference type="SAM" id="MobiDB-lite"/>
    </source>
</evidence>
<organism>
    <name type="scientific">Aliivibrio fischeri (strain MJ11)</name>
    <name type="common">Vibrio fischeri</name>
    <dbReference type="NCBI Taxonomy" id="388396"/>
    <lineage>
        <taxon>Bacteria</taxon>
        <taxon>Pseudomonadati</taxon>
        <taxon>Pseudomonadota</taxon>
        <taxon>Gammaproteobacteria</taxon>
        <taxon>Vibrionales</taxon>
        <taxon>Vibrionaceae</taxon>
        <taxon>Aliivibrio</taxon>
    </lineage>
</organism>
<gene>
    <name evidence="1" type="primary">hslU</name>
    <name type="ordered locus">VFMJ11_2390</name>
</gene>
<name>HSLU_ALIFM</name>
<keyword id="KW-0067">ATP-binding</keyword>
<keyword id="KW-0143">Chaperone</keyword>
<keyword id="KW-0963">Cytoplasm</keyword>
<keyword id="KW-0547">Nucleotide-binding</keyword>
<keyword id="KW-0346">Stress response</keyword>
<feature type="chain" id="PRO_1000100980" description="ATP-dependent protease ATPase subunit HslU">
    <location>
        <begin position="1"/>
        <end position="444"/>
    </location>
</feature>
<feature type="region of interest" description="Disordered" evidence="2">
    <location>
        <begin position="141"/>
        <end position="161"/>
    </location>
</feature>
<feature type="binding site" evidence="1">
    <location>
        <position position="18"/>
    </location>
    <ligand>
        <name>ATP</name>
        <dbReference type="ChEBI" id="CHEBI:30616"/>
    </ligand>
</feature>
<feature type="binding site" evidence="1">
    <location>
        <begin position="60"/>
        <end position="65"/>
    </location>
    <ligand>
        <name>ATP</name>
        <dbReference type="ChEBI" id="CHEBI:30616"/>
    </ligand>
</feature>
<feature type="binding site" evidence="1">
    <location>
        <position position="257"/>
    </location>
    <ligand>
        <name>ATP</name>
        <dbReference type="ChEBI" id="CHEBI:30616"/>
    </ligand>
</feature>
<feature type="binding site" evidence="1">
    <location>
        <position position="322"/>
    </location>
    <ligand>
        <name>ATP</name>
        <dbReference type="ChEBI" id="CHEBI:30616"/>
    </ligand>
</feature>
<feature type="binding site" evidence="1">
    <location>
        <position position="394"/>
    </location>
    <ligand>
        <name>ATP</name>
        <dbReference type="ChEBI" id="CHEBI:30616"/>
    </ligand>
</feature>
<protein>
    <recommendedName>
        <fullName evidence="1">ATP-dependent protease ATPase subunit HslU</fullName>
    </recommendedName>
    <alternativeName>
        <fullName evidence="1">Unfoldase HslU</fullName>
    </alternativeName>
</protein>
<comment type="function">
    <text evidence="1">ATPase subunit of a proteasome-like degradation complex; this subunit has chaperone activity. The binding of ATP and its subsequent hydrolysis by HslU are essential for unfolding of protein substrates subsequently hydrolyzed by HslV. HslU recognizes the N-terminal part of its protein substrates and unfolds these before they are guided to HslV for hydrolysis.</text>
</comment>
<comment type="subunit">
    <text evidence="1">A double ring-shaped homohexamer of HslV is capped on each side by a ring-shaped HslU homohexamer. The assembly of the HslU/HslV complex is dependent on binding of ATP.</text>
</comment>
<comment type="subcellular location">
    <subcellularLocation>
        <location evidence="1">Cytoplasm</location>
    </subcellularLocation>
</comment>
<comment type="similarity">
    <text evidence="1">Belongs to the ClpX chaperone family. HslU subfamily.</text>
</comment>
<sequence>MSEMTPREIVHELDSHIIGQDKAKRSVAIALRNRWRRMQLAPELRTEVTPKNILMIGPTGVGKTEIARRLAKLANAPFIKVEATKFTEVGYVGKEVESIIRDLTDVAIKMTHQQAVEKVKFRAEEHAEDRILDILLPPARDAWGNNEEGDNDSGTRQSFRKKLREGKLDDKEIEVDVAAPQVGVEIMAPPGMEEMTNQLQGMFQNLSGGNTTKKRKMKIVDALKALTEEEGAKLVNPEELKEQAIFNVENHGIVFIDEIDKICKGSNSHSGDVSREGVQRDLLPLVEGSTVSTKHGMVKTDHMLFITSGAFQMAKPSDLIPELQGRLPIRVELEALTANDFKRILTEPNASLTEQYIALLATENVKVEFTEDGISRIAESAFQVNETTENIGARRLHTVMERLMEEISYDASEKNGESLIVDAEYVSSRLGELVADEDLSRFIL</sequence>
<dbReference type="EMBL" id="CP001139">
    <property type="protein sequence ID" value="ACH65596.1"/>
    <property type="molecule type" value="Genomic_DNA"/>
</dbReference>
<dbReference type="RefSeq" id="WP_005421071.1">
    <property type="nucleotide sequence ID" value="NC_011184.1"/>
</dbReference>
<dbReference type="SMR" id="B5FBL8"/>
<dbReference type="KEGG" id="vfm:VFMJ11_2390"/>
<dbReference type="HOGENOM" id="CLU_033123_0_0_6"/>
<dbReference type="Proteomes" id="UP000001857">
    <property type="component" value="Chromosome I"/>
</dbReference>
<dbReference type="GO" id="GO:0009376">
    <property type="term" value="C:HslUV protease complex"/>
    <property type="evidence" value="ECO:0007669"/>
    <property type="project" value="UniProtKB-UniRule"/>
</dbReference>
<dbReference type="GO" id="GO:0005524">
    <property type="term" value="F:ATP binding"/>
    <property type="evidence" value="ECO:0007669"/>
    <property type="project" value="UniProtKB-UniRule"/>
</dbReference>
<dbReference type="GO" id="GO:0016887">
    <property type="term" value="F:ATP hydrolysis activity"/>
    <property type="evidence" value="ECO:0007669"/>
    <property type="project" value="InterPro"/>
</dbReference>
<dbReference type="GO" id="GO:0008233">
    <property type="term" value="F:peptidase activity"/>
    <property type="evidence" value="ECO:0007669"/>
    <property type="project" value="InterPro"/>
</dbReference>
<dbReference type="GO" id="GO:0036402">
    <property type="term" value="F:proteasome-activating activity"/>
    <property type="evidence" value="ECO:0007669"/>
    <property type="project" value="UniProtKB-UniRule"/>
</dbReference>
<dbReference type="GO" id="GO:0043335">
    <property type="term" value="P:protein unfolding"/>
    <property type="evidence" value="ECO:0007669"/>
    <property type="project" value="UniProtKB-UniRule"/>
</dbReference>
<dbReference type="GO" id="GO:0051603">
    <property type="term" value="P:proteolysis involved in protein catabolic process"/>
    <property type="evidence" value="ECO:0007669"/>
    <property type="project" value="TreeGrafter"/>
</dbReference>
<dbReference type="CDD" id="cd19498">
    <property type="entry name" value="RecA-like_HslU"/>
    <property type="match status" value="1"/>
</dbReference>
<dbReference type="FunFam" id="1.10.8.10:FF:000028">
    <property type="entry name" value="ATP-dependent protease ATPase subunit HslU"/>
    <property type="match status" value="1"/>
</dbReference>
<dbReference type="FunFam" id="1.10.8.60:FF:000027">
    <property type="entry name" value="ATP-dependent protease ATPase subunit HslU"/>
    <property type="match status" value="1"/>
</dbReference>
<dbReference type="FunFam" id="3.40.50.300:FF:000213">
    <property type="entry name" value="ATP-dependent protease ATPase subunit HslU"/>
    <property type="match status" value="1"/>
</dbReference>
<dbReference type="FunFam" id="3.40.50.300:FF:000220">
    <property type="entry name" value="ATP-dependent protease ATPase subunit HslU"/>
    <property type="match status" value="1"/>
</dbReference>
<dbReference type="Gene3D" id="1.10.8.60">
    <property type="match status" value="1"/>
</dbReference>
<dbReference type="Gene3D" id="1.10.8.10">
    <property type="entry name" value="DNA helicase RuvA subunit, C-terminal domain"/>
    <property type="match status" value="1"/>
</dbReference>
<dbReference type="Gene3D" id="3.40.50.300">
    <property type="entry name" value="P-loop containing nucleotide triphosphate hydrolases"/>
    <property type="match status" value="2"/>
</dbReference>
<dbReference type="HAMAP" id="MF_00249">
    <property type="entry name" value="HslU"/>
    <property type="match status" value="1"/>
</dbReference>
<dbReference type="InterPro" id="IPR003593">
    <property type="entry name" value="AAA+_ATPase"/>
</dbReference>
<dbReference type="InterPro" id="IPR050052">
    <property type="entry name" value="ATP-dep_Clp_protease_ClpX"/>
</dbReference>
<dbReference type="InterPro" id="IPR003959">
    <property type="entry name" value="ATPase_AAA_core"/>
</dbReference>
<dbReference type="InterPro" id="IPR019489">
    <property type="entry name" value="Clp_ATPase_C"/>
</dbReference>
<dbReference type="InterPro" id="IPR004491">
    <property type="entry name" value="HslU"/>
</dbReference>
<dbReference type="InterPro" id="IPR027417">
    <property type="entry name" value="P-loop_NTPase"/>
</dbReference>
<dbReference type="NCBIfam" id="TIGR00390">
    <property type="entry name" value="hslU"/>
    <property type="match status" value="1"/>
</dbReference>
<dbReference type="NCBIfam" id="NF003544">
    <property type="entry name" value="PRK05201.1"/>
    <property type="match status" value="1"/>
</dbReference>
<dbReference type="PANTHER" id="PTHR48102">
    <property type="entry name" value="ATP-DEPENDENT CLP PROTEASE ATP-BINDING SUBUNIT CLPX-LIKE, MITOCHONDRIAL-RELATED"/>
    <property type="match status" value="1"/>
</dbReference>
<dbReference type="PANTHER" id="PTHR48102:SF3">
    <property type="entry name" value="ATP-DEPENDENT PROTEASE ATPASE SUBUNIT HSLU"/>
    <property type="match status" value="1"/>
</dbReference>
<dbReference type="Pfam" id="PF00004">
    <property type="entry name" value="AAA"/>
    <property type="match status" value="1"/>
</dbReference>
<dbReference type="Pfam" id="PF07724">
    <property type="entry name" value="AAA_2"/>
    <property type="match status" value="1"/>
</dbReference>
<dbReference type="SMART" id="SM00382">
    <property type="entry name" value="AAA"/>
    <property type="match status" value="1"/>
</dbReference>
<dbReference type="SMART" id="SM01086">
    <property type="entry name" value="ClpB_D2-small"/>
    <property type="match status" value="1"/>
</dbReference>
<dbReference type="SUPFAM" id="SSF52540">
    <property type="entry name" value="P-loop containing nucleoside triphosphate hydrolases"/>
    <property type="match status" value="1"/>
</dbReference>
<accession>B5FBL8</accession>
<reference key="1">
    <citation type="submission" date="2008-08" db="EMBL/GenBank/DDBJ databases">
        <title>Complete sequence of Vibrio fischeri strain MJ11.</title>
        <authorList>
            <person name="Mandel M.J."/>
            <person name="Stabb E.V."/>
            <person name="Ruby E.G."/>
            <person name="Ferriera S."/>
            <person name="Johnson J."/>
            <person name="Kravitz S."/>
            <person name="Beeson K."/>
            <person name="Sutton G."/>
            <person name="Rogers Y.-H."/>
            <person name="Friedman R."/>
            <person name="Frazier M."/>
            <person name="Venter J.C."/>
        </authorList>
    </citation>
    <scope>NUCLEOTIDE SEQUENCE [LARGE SCALE GENOMIC DNA]</scope>
    <source>
        <strain>MJ11</strain>
    </source>
</reference>
<proteinExistence type="inferred from homology"/>